<organism>
    <name type="scientific">Rana temporaria</name>
    <name type="common">European common frog</name>
    <dbReference type="NCBI Taxonomy" id="8407"/>
    <lineage>
        <taxon>Eukaryota</taxon>
        <taxon>Metazoa</taxon>
        <taxon>Chordata</taxon>
        <taxon>Craniata</taxon>
        <taxon>Vertebrata</taxon>
        <taxon>Euteleostomi</taxon>
        <taxon>Amphibia</taxon>
        <taxon>Batrachia</taxon>
        <taxon>Anura</taxon>
        <taxon>Neobatrachia</taxon>
        <taxon>Ranoidea</taxon>
        <taxon>Ranidae</taxon>
        <taxon>Rana</taxon>
        <taxon>Rana</taxon>
    </lineage>
</organism>
<protein>
    <recommendedName>
        <fullName>Melittin-like peptide</fullName>
        <shortName>MLP</shortName>
    </recommendedName>
</protein>
<keyword id="KW-0027">Amidation</keyword>
<keyword id="KW-0878">Amphibian defense peptide</keyword>
<keyword id="KW-0903">Direct protein sequencing</keyword>
<keyword id="KW-0964">Secreted</keyword>
<accession>P56924</accession>
<reference key="1">
    <citation type="journal article" date="1996" name="Eur. J. Biochem.">
        <title>Temporins, antimicrobial peptides from the European red frog Rana temporaria.</title>
        <authorList>
            <person name="Simmaco M."/>
            <person name="Mignogna G."/>
            <person name="Canofeni S."/>
            <person name="Miele R."/>
            <person name="Mangoni M.L."/>
            <person name="Barra D."/>
        </authorList>
    </citation>
    <scope>PROTEIN SEQUENCE</scope>
    <scope>AMIDATION AT GLN-22</scope>
    <source>
        <tissue>Skin secretion</tissue>
    </source>
</reference>
<evidence type="ECO:0000269" key="1">
    <source>
    </source>
</evidence>
<sequence length="22" mass="2313">FIGSALKVLAGVLPSIVSWVKQ</sequence>
<proteinExistence type="evidence at protein level"/>
<comment type="subcellular location">
    <subcellularLocation>
        <location>Secreted</location>
    </subcellularLocation>
</comment>
<comment type="tissue specificity">
    <text>Expressed by the skin dorsal glands.</text>
</comment>
<dbReference type="GO" id="GO:0005576">
    <property type="term" value="C:extracellular region"/>
    <property type="evidence" value="ECO:0007669"/>
    <property type="project" value="UniProtKB-SubCell"/>
</dbReference>
<dbReference type="GO" id="GO:0004860">
    <property type="term" value="F:protein kinase inhibitor activity"/>
    <property type="evidence" value="ECO:0007669"/>
    <property type="project" value="InterPro"/>
</dbReference>
<dbReference type="GO" id="GO:0006952">
    <property type="term" value="P:defense response"/>
    <property type="evidence" value="ECO:0007669"/>
    <property type="project" value="UniProtKB-KW"/>
</dbReference>
<dbReference type="InterPro" id="IPR002116">
    <property type="entry name" value="Melittin/Api_allergen"/>
</dbReference>
<dbReference type="Pfam" id="PF01372">
    <property type="entry name" value="Melittin"/>
    <property type="match status" value="1"/>
</dbReference>
<name>MLP_RANTE</name>
<feature type="peptide" id="PRO_0000043810" description="Melittin-like peptide">
    <location>
        <begin position="1"/>
        <end position="22"/>
    </location>
</feature>
<feature type="modified residue" description="Glutamine amide" evidence="1">
    <location>
        <position position="22"/>
    </location>
</feature>